<keyword id="KW-0963">Cytoplasm</keyword>
<keyword id="KW-0238">DNA-binding</keyword>
<keyword id="KW-1185">Reference proteome</keyword>
<accession>P67268</accession>
<accession>Q48WS7</accession>
<accession>Q99Y56</accession>
<reference key="1">
    <citation type="journal article" date="2001" name="Proc. Natl. Acad. Sci. U.S.A.">
        <title>Complete genome sequence of an M1 strain of Streptococcus pyogenes.</title>
        <authorList>
            <person name="Ferretti J.J."/>
            <person name="McShan W.M."/>
            <person name="Ajdic D.J."/>
            <person name="Savic D.J."/>
            <person name="Savic G."/>
            <person name="Lyon K."/>
            <person name="Primeaux C."/>
            <person name="Sezate S."/>
            <person name="Suvorov A.N."/>
            <person name="Kenton S."/>
            <person name="Lai H.S."/>
            <person name="Lin S.P."/>
            <person name="Qian Y."/>
            <person name="Jia H.G."/>
            <person name="Najar F.Z."/>
            <person name="Ren Q."/>
            <person name="Zhu H."/>
            <person name="Song L."/>
            <person name="White J."/>
            <person name="Yuan X."/>
            <person name="Clifton S.W."/>
            <person name="Roe B.A."/>
            <person name="McLaughlin R.E."/>
        </authorList>
    </citation>
    <scope>NUCLEOTIDE SEQUENCE [LARGE SCALE GENOMIC DNA]</scope>
    <source>
        <strain>ATCC 700294 / SF370 / Serotype M1</strain>
    </source>
</reference>
<reference key="2">
    <citation type="journal article" date="2005" name="J. Infect. Dis.">
        <title>Evolutionary origin and emergence of a highly successful clone of serotype M1 group A Streptococcus involved multiple horizontal gene transfer events.</title>
        <authorList>
            <person name="Sumby P."/>
            <person name="Porcella S.F."/>
            <person name="Madrigal A.G."/>
            <person name="Barbian K.D."/>
            <person name="Virtaneva K."/>
            <person name="Ricklefs S.M."/>
            <person name="Sturdevant D.E."/>
            <person name="Graham M.R."/>
            <person name="Vuopio-Varkila J."/>
            <person name="Hoe N.P."/>
            <person name="Musser J.M."/>
        </authorList>
    </citation>
    <scope>NUCLEOTIDE SEQUENCE [LARGE SCALE GENOMIC DNA]</scope>
    <source>
        <strain>ATCC BAA-947 / MGAS5005 / Serotype M1</strain>
    </source>
</reference>
<evidence type="ECO:0000255" key="1">
    <source>
        <dbReference type="HAMAP-Rule" id="MF_00274"/>
    </source>
</evidence>
<feature type="chain" id="PRO_0000170450" description="Nucleoid-associated protein SPy_1862/M5005_Spy1580">
    <location>
        <begin position="1"/>
        <end position="99"/>
    </location>
</feature>
<protein>
    <recommendedName>
        <fullName evidence="1">Nucleoid-associated protein SPy_1862/M5005_Spy1580</fullName>
    </recommendedName>
</protein>
<proteinExistence type="inferred from homology"/>
<sequence>MMNMQNMMKQAQKLQKQMEQKQADLAAMQFTGKSAQDLVTATFTGDKKLVGIDFKEAVVDPEDVETLQDMTTQAINDALTQIDETTKKTLGAFAGKLPF</sequence>
<organism>
    <name type="scientific">Streptococcus pyogenes serotype M1</name>
    <dbReference type="NCBI Taxonomy" id="301447"/>
    <lineage>
        <taxon>Bacteria</taxon>
        <taxon>Bacillati</taxon>
        <taxon>Bacillota</taxon>
        <taxon>Bacilli</taxon>
        <taxon>Lactobacillales</taxon>
        <taxon>Streptococcaceae</taxon>
        <taxon>Streptococcus</taxon>
    </lineage>
</organism>
<gene>
    <name type="ordered locus">SPy_1862</name>
    <name type="ordered locus">M5005_Spy1580</name>
</gene>
<comment type="function">
    <text evidence="1">Binds to DNA and alters its conformation. May be involved in regulation of gene expression, nucleoid organization and DNA protection.</text>
</comment>
<comment type="subunit">
    <text evidence="1">Homodimer.</text>
</comment>
<comment type="subcellular location">
    <subcellularLocation>
        <location evidence="1">Cytoplasm</location>
        <location evidence="1">Nucleoid</location>
    </subcellularLocation>
</comment>
<comment type="similarity">
    <text evidence="1">Belongs to the YbaB/EbfC family.</text>
</comment>
<name>Y1862_STRP1</name>
<dbReference type="EMBL" id="AE004092">
    <property type="protein sequence ID" value="AAK34576.1"/>
    <property type="molecule type" value="Genomic_DNA"/>
</dbReference>
<dbReference type="EMBL" id="CP000017">
    <property type="protein sequence ID" value="AAZ52198.1"/>
    <property type="molecule type" value="Genomic_DNA"/>
</dbReference>
<dbReference type="RefSeq" id="NP_269855.1">
    <property type="nucleotide sequence ID" value="NC_002737.2"/>
</dbReference>
<dbReference type="SMR" id="P67268"/>
<dbReference type="PaxDb" id="1314-HKU360_01701"/>
<dbReference type="KEGG" id="spy:SPy_1862"/>
<dbReference type="KEGG" id="spz:M5005_Spy1580"/>
<dbReference type="PATRIC" id="fig|160490.10.peg.1614"/>
<dbReference type="HOGENOM" id="CLU_140930_1_1_9"/>
<dbReference type="OMA" id="MGNMMKQ"/>
<dbReference type="Proteomes" id="UP000000750">
    <property type="component" value="Chromosome"/>
</dbReference>
<dbReference type="GO" id="GO:0043590">
    <property type="term" value="C:bacterial nucleoid"/>
    <property type="evidence" value="ECO:0007669"/>
    <property type="project" value="UniProtKB-UniRule"/>
</dbReference>
<dbReference type="GO" id="GO:0005829">
    <property type="term" value="C:cytosol"/>
    <property type="evidence" value="ECO:0007669"/>
    <property type="project" value="TreeGrafter"/>
</dbReference>
<dbReference type="GO" id="GO:0003677">
    <property type="term" value="F:DNA binding"/>
    <property type="evidence" value="ECO:0007669"/>
    <property type="project" value="UniProtKB-UniRule"/>
</dbReference>
<dbReference type="Gene3D" id="3.30.1310.10">
    <property type="entry name" value="Nucleoid-associated protein YbaB-like domain"/>
    <property type="match status" value="1"/>
</dbReference>
<dbReference type="HAMAP" id="MF_00274">
    <property type="entry name" value="DNA_YbaB_EbfC"/>
    <property type="match status" value="1"/>
</dbReference>
<dbReference type="InterPro" id="IPR036894">
    <property type="entry name" value="YbaB-like_sf"/>
</dbReference>
<dbReference type="InterPro" id="IPR004401">
    <property type="entry name" value="YbaB/EbfC"/>
</dbReference>
<dbReference type="NCBIfam" id="TIGR00103">
    <property type="entry name" value="DNA_YbaB_EbfC"/>
    <property type="match status" value="1"/>
</dbReference>
<dbReference type="PANTHER" id="PTHR33449">
    <property type="entry name" value="NUCLEOID-ASSOCIATED PROTEIN YBAB"/>
    <property type="match status" value="1"/>
</dbReference>
<dbReference type="PANTHER" id="PTHR33449:SF1">
    <property type="entry name" value="NUCLEOID-ASSOCIATED PROTEIN YBAB"/>
    <property type="match status" value="1"/>
</dbReference>
<dbReference type="Pfam" id="PF02575">
    <property type="entry name" value="YbaB_DNA_bd"/>
    <property type="match status" value="1"/>
</dbReference>
<dbReference type="PIRSF" id="PIRSF004555">
    <property type="entry name" value="UCP004555"/>
    <property type="match status" value="1"/>
</dbReference>
<dbReference type="SUPFAM" id="SSF82607">
    <property type="entry name" value="YbaB-like"/>
    <property type="match status" value="1"/>
</dbReference>